<accession>C0Q077</accession>
<gene>
    <name evidence="1" type="primary">rhmD</name>
    <name type="ordered locus">SPC_1420</name>
</gene>
<proteinExistence type="inferred from homology"/>
<reference key="1">
    <citation type="journal article" date="2009" name="PLoS ONE">
        <title>Salmonella paratyphi C: genetic divergence from Salmonella choleraesuis and pathogenic convergence with Salmonella typhi.</title>
        <authorList>
            <person name="Liu W.-Q."/>
            <person name="Feng Y."/>
            <person name="Wang Y."/>
            <person name="Zou Q.-H."/>
            <person name="Chen F."/>
            <person name="Guo J.-T."/>
            <person name="Peng Y.-H."/>
            <person name="Jin Y."/>
            <person name="Li Y.-G."/>
            <person name="Hu S.-N."/>
            <person name="Johnston R.N."/>
            <person name="Liu G.-R."/>
            <person name="Liu S.-L."/>
        </authorList>
    </citation>
    <scope>NUCLEOTIDE SEQUENCE [LARGE SCALE GENOMIC DNA]</scope>
    <source>
        <strain>RKS4594</strain>
    </source>
</reference>
<protein>
    <recommendedName>
        <fullName evidence="1">L-rhamnonate dehydratase</fullName>
        <shortName evidence="1">RhamD</shortName>
        <ecNumber evidence="1">4.2.1.90</ecNumber>
    </recommendedName>
</protein>
<evidence type="ECO:0000255" key="1">
    <source>
        <dbReference type="HAMAP-Rule" id="MF_01288"/>
    </source>
</evidence>
<sequence length="405" mass="44623">MENIMTLPKIKHVRAWFIGGATAEKGAGGGDYHDQGGNHWIDDHIATPMSKYRDYEQSRQSFGINVLGTLIVEVEAENGQTGFAVSTAGEMGCFIVEKHLNRFIEGKCVSDIKLIHDQMLGATMYYSGSGGLVMNTISCVDLALWDLFGKVVGLPVYKLLGGAVRDEIQFYATGARPDLAKEMGFIGGKMPTHWGPHDGDAGIRKDAAMVADMREKCGPDFWLMLDCWMSQDVNYATKLAHACAPFNLKWIEECLPPQQYEGYRELKRNAPAGMMVTSGEHHGTLQSFRTLAETGIDIMQPDVGWCGGLTTLVEIAALAKSRGQLVVPHGSSVYSHHAVITFTNTPFSEFLMTSPDCSTLRPQFDPILLDELVPVNGRIHKSVLDKPGFGVELNRDCHLKRPYSH</sequence>
<name>RHMD_SALPC</name>
<comment type="function">
    <text evidence="1">Catalyzes the dehydration of L-rhamnonate to 2-keto-3-deoxy-L-rhamnonate (KDR).</text>
</comment>
<comment type="catalytic activity">
    <reaction evidence="1">
        <text>L-rhamnonate = 2-dehydro-3-deoxy-L-rhamnonate + H2O</text>
        <dbReference type="Rhea" id="RHEA:23080"/>
        <dbReference type="ChEBI" id="CHEBI:15377"/>
        <dbReference type="ChEBI" id="CHEBI:58118"/>
        <dbReference type="ChEBI" id="CHEBI:58371"/>
        <dbReference type="EC" id="4.2.1.90"/>
    </reaction>
</comment>
<comment type="cofactor">
    <cofactor evidence="1">
        <name>Mg(2+)</name>
        <dbReference type="ChEBI" id="CHEBI:18420"/>
    </cofactor>
    <text evidence="1">Binds 1 Mg(2+) ion per subunit.</text>
</comment>
<comment type="subunit">
    <text evidence="1">Homooctamer; tetramer of dimers.</text>
</comment>
<comment type="miscellaneous">
    <text evidence="1">Reaction proceeds via a syn dehydration.</text>
</comment>
<comment type="similarity">
    <text evidence="1">Belongs to the mandelate racemase/muconate lactonizing enzyme family. RhamD subfamily.</text>
</comment>
<organism>
    <name type="scientific">Salmonella paratyphi C (strain RKS4594)</name>
    <dbReference type="NCBI Taxonomy" id="476213"/>
    <lineage>
        <taxon>Bacteria</taxon>
        <taxon>Pseudomonadati</taxon>
        <taxon>Pseudomonadota</taxon>
        <taxon>Gammaproteobacteria</taxon>
        <taxon>Enterobacterales</taxon>
        <taxon>Enterobacteriaceae</taxon>
        <taxon>Salmonella</taxon>
    </lineage>
</organism>
<dbReference type="EC" id="4.2.1.90" evidence="1"/>
<dbReference type="EMBL" id="CP000857">
    <property type="protein sequence ID" value="ACN45581.1"/>
    <property type="molecule type" value="Genomic_DNA"/>
</dbReference>
<dbReference type="SMR" id="C0Q077"/>
<dbReference type="KEGG" id="sei:SPC_1420"/>
<dbReference type="HOGENOM" id="CLU_030273_1_0_6"/>
<dbReference type="Proteomes" id="UP000001599">
    <property type="component" value="Chromosome"/>
</dbReference>
<dbReference type="GO" id="GO:0050032">
    <property type="term" value="F:L-rhamnonate dehydratase activity"/>
    <property type="evidence" value="ECO:0007669"/>
    <property type="project" value="UniProtKB-UniRule"/>
</dbReference>
<dbReference type="GO" id="GO:0000287">
    <property type="term" value="F:magnesium ion binding"/>
    <property type="evidence" value="ECO:0007669"/>
    <property type="project" value="UniProtKB-UniRule"/>
</dbReference>
<dbReference type="GO" id="GO:0009063">
    <property type="term" value="P:amino acid catabolic process"/>
    <property type="evidence" value="ECO:0007669"/>
    <property type="project" value="InterPro"/>
</dbReference>
<dbReference type="GO" id="GO:0016052">
    <property type="term" value="P:carbohydrate catabolic process"/>
    <property type="evidence" value="ECO:0007669"/>
    <property type="project" value="TreeGrafter"/>
</dbReference>
<dbReference type="CDD" id="cd03327">
    <property type="entry name" value="MR_like_2"/>
    <property type="match status" value="1"/>
</dbReference>
<dbReference type="FunFam" id="3.30.390.10:FF:000007">
    <property type="entry name" value="L-rhamnonate dehydratase"/>
    <property type="match status" value="1"/>
</dbReference>
<dbReference type="FunFam" id="3.20.20.120:FF:000005">
    <property type="entry name" value="Putative L-rhamnonate dehydratase"/>
    <property type="match status" value="1"/>
</dbReference>
<dbReference type="Gene3D" id="3.20.20.120">
    <property type="entry name" value="Enolase-like C-terminal domain"/>
    <property type="match status" value="1"/>
</dbReference>
<dbReference type="Gene3D" id="3.30.390.10">
    <property type="entry name" value="Enolase-like, N-terminal domain"/>
    <property type="match status" value="1"/>
</dbReference>
<dbReference type="HAMAP" id="MF_01288">
    <property type="entry name" value="Rhamnon_dehydrat"/>
    <property type="match status" value="1"/>
</dbReference>
<dbReference type="InterPro" id="IPR036849">
    <property type="entry name" value="Enolase-like_C_sf"/>
</dbReference>
<dbReference type="InterPro" id="IPR029017">
    <property type="entry name" value="Enolase-like_N"/>
</dbReference>
<dbReference type="InterPro" id="IPR029065">
    <property type="entry name" value="Enolase_C-like"/>
</dbReference>
<dbReference type="InterPro" id="IPR023444">
    <property type="entry name" value="L-Rhamnon_dehydrat"/>
</dbReference>
<dbReference type="InterPro" id="IPR018110">
    <property type="entry name" value="Mandel_Rmase/mucon_lact_enz_CS"/>
</dbReference>
<dbReference type="InterPro" id="IPR013342">
    <property type="entry name" value="Mandelate_racemase_C"/>
</dbReference>
<dbReference type="InterPro" id="IPR013341">
    <property type="entry name" value="Mandelate_racemase_N_dom"/>
</dbReference>
<dbReference type="InterPro" id="IPR046945">
    <property type="entry name" value="RHMD-like"/>
</dbReference>
<dbReference type="NCBIfam" id="NF011968">
    <property type="entry name" value="PRK15440.1"/>
    <property type="match status" value="1"/>
</dbReference>
<dbReference type="PANTHER" id="PTHR13794">
    <property type="entry name" value="ENOLASE SUPERFAMILY, MANDELATE RACEMASE"/>
    <property type="match status" value="1"/>
</dbReference>
<dbReference type="PANTHER" id="PTHR13794:SF58">
    <property type="entry name" value="MITOCHONDRIAL ENOLASE SUPERFAMILY MEMBER 1"/>
    <property type="match status" value="1"/>
</dbReference>
<dbReference type="Pfam" id="PF13378">
    <property type="entry name" value="MR_MLE_C"/>
    <property type="match status" value="1"/>
</dbReference>
<dbReference type="Pfam" id="PF02746">
    <property type="entry name" value="MR_MLE_N"/>
    <property type="match status" value="1"/>
</dbReference>
<dbReference type="SFLD" id="SFLDS00001">
    <property type="entry name" value="Enolase"/>
    <property type="match status" value="1"/>
</dbReference>
<dbReference type="SFLD" id="SFLDF00006">
    <property type="entry name" value="rhamnonate_dehydratase"/>
    <property type="match status" value="1"/>
</dbReference>
<dbReference type="SMART" id="SM00922">
    <property type="entry name" value="MR_MLE"/>
    <property type="match status" value="1"/>
</dbReference>
<dbReference type="SUPFAM" id="SSF51604">
    <property type="entry name" value="Enolase C-terminal domain-like"/>
    <property type="match status" value="1"/>
</dbReference>
<dbReference type="SUPFAM" id="SSF54826">
    <property type="entry name" value="Enolase N-terminal domain-like"/>
    <property type="match status" value="1"/>
</dbReference>
<dbReference type="PROSITE" id="PS00908">
    <property type="entry name" value="MR_MLE_1"/>
    <property type="match status" value="1"/>
</dbReference>
<feature type="chain" id="PRO_1000165266" description="L-rhamnonate dehydratase">
    <location>
        <begin position="1"/>
        <end position="405"/>
    </location>
</feature>
<feature type="active site" description="Proton acceptor" evidence="1">
    <location>
        <position position="329"/>
    </location>
</feature>
<feature type="binding site" evidence="1">
    <location>
        <position position="33"/>
    </location>
    <ligand>
        <name>substrate</name>
    </ligand>
</feature>
<feature type="binding site" evidence="1">
    <location>
        <position position="59"/>
    </location>
    <ligand>
        <name>substrate</name>
    </ligand>
</feature>
<feature type="binding site" evidence="1">
    <location>
        <position position="226"/>
    </location>
    <ligand>
        <name>Mg(2+)</name>
        <dbReference type="ChEBI" id="CHEBI:18420"/>
    </ligand>
</feature>
<feature type="binding site" evidence="1">
    <location>
        <position position="252"/>
    </location>
    <ligand>
        <name>Mg(2+)</name>
        <dbReference type="ChEBI" id="CHEBI:18420"/>
    </ligand>
</feature>
<feature type="binding site" evidence="1">
    <location>
        <position position="280"/>
    </location>
    <ligand>
        <name>Mg(2+)</name>
        <dbReference type="ChEBI" id="CHEBI:18420"/>
    </ligand>
</feature>
<feature type="binding site" evidence="1">
    <location>
        <position position="349"/>
    </location>
    <ligand>
        <name>substrate</name>
    </ligand>
</feature>
<feature type="site" description="Increases basicity of active site His" evidence="1">
    <location>
        <position position="302"/>
    </location>
</feature>
<feature type="site" description="Transition state stabilizer" evidence="1">
    <location>
        <position position="349"/>
    </location>
</feature>
<keyword id="KW-0456">Lyase</keyword>
<keyword id="KW-0460">Magnesium</keyword>
<keyword id="KW-0479">Metal-binding</keyword>